<proteinExistence type="inferred from homology"/>
<gene>
    <name evidence="1" type="primary">trmA</name>
    <name type="ordered locus">ECS88_4424</name>
</gene>
<evidence type="ECO:0000255" key="1">
    <source>
        <dbReference type="HAMAP-Rule" id="MF_01011"/>
    </source>
</evidence>
<keyword id="KW-0489">Methyltransferase</keyword>
<keyword id="KW-1185">Reference proteome</keyword>
<keyword id="KW-0949">S-adenosyl-L-methionine</keyword>
<keyword id="KW-0808">Transferase</keyword>
<keyword id="KW-0819">tRNA processing</keyword>
<organism>
    <name type="scientific">Escherichia coli O45:K1 (strain S88 / ExPEC)</name>
    <dbReference type="NCBI Taxonomy" id="585035"/>
    <lineage>
        <taxon>Bacteria</taxon>
        <taxon>Pseudomonadati</taxon>
        <taxon>Pseudomonadota</taxon>
        <taxon>Gammaproteobacteria</taxon>
        <taxon>Enterobacterales</taxon>
        <taxon>Enterobacteriaceae</taxon>
        <taxon>Escherichia</taxon>
    </lineage>
</organism>
<accession>B7MIA5</accession>
<name>TRMA_ECO45</name>
<dbReference type="EC" id="2.1.1.-" evidence="1"/>
<dbReference type="EC" id="2.1.1.35" evidence="1"/>
<dbReference type="EMBL" id="CU928161">
    <property type="protein sequence ID" value="CAR05603.1"/>
    <property type="molecule type" value="Genomic_DNA"/>
</dbReference>
<dbReference type="RefSeq" id="WP_000187001.1">
    <property type="nucleotide sequence ID" value="NC_011742.1"/>
</dbReference>
<dbReference type="SMR" id="B7MIA5"/>
<dbReference type="KEGG" id="ecz:ECS88_4424"/>
<dbReference type="HOGENOM" id="CLU_043022_0_0_6"/>
<dbReference type="Proteomes" id="UP000000747">
    <property type="component" value="Chromosome"/>
</dbReference>
<dbReference type="GO" id="GO:0005829">
    <property type="term" value="C:cytosol"/>
    <property type="evidence" value="ECO:0007669"/>
    <property type="project" value="TreeGrafter"/>
</dbReference>
<dbReference type="GO" id="GO:0019843">
    <property type="term" value="F:rRNA binding"/>
    <property type="evidence" value="ECO:0007669"/>
    <property type="project" value="TreeGrafter"/>
</dbReference>
<dbReference type="GO" id="GO:0030697">
    <property type="term" value="F:tRNA (uracil(54)-C5)-methyltransferase activity, S-adenosyl methionine-dependent"/>
    <property type="evidence" value="ECO:0007669"/>
    <property type="project" value="UniProtKB-UniRule"/>
</dbReference>
<dbReference type="GO" id="GO:0000049">
    <property type="term" value="F:tRNA binding"/>
    <property type="evidence" value="ECO:0007669"/>
    <property type="project" value="TreeGrafter"/>
</dbReference>
<dbReference type="GO" id="GO:0030488">
    <property type="term" value="P:tRNA methylation"/>
    <property type="evidence" value="ECO:0007669"/>
    <property type="project" value="UniProtKB-UniRule"/>
</dbReference>
<dbReference type="CDD" id="cd02440">
    <property type="entry name" value="AdoMet_MTases"/>
    <property type="match status" value="1"/>
</dbReference>
<dbReference type="FunFam" id="2.40.50.1070:FF:000001">
    <property type="entry name" value="tRNA/tmRNA (uracil-C(5))-methyltransferase"/>
    <property type="match status" value="1"/>
</dbReference>
<dbReference type="FunFam" id="3.40.50.150:FF:000012">
    <property type="entry name" value="tRNA/tmRNA (uracil-C(5))-methyltransferase"/>
    <property type="match status" value="1"/>
</dbReference>
<dbReference type="Gene3D" id="2.40.50.1070">
    <property type="match status" value="1"/>
</dbReference>
<dbReference type="Gene3D" id="3.40.50.150">
    <property type="entry name" value="Vaccinia Virus protein VP39"/>
    <property type="match status" value="1"/>
</dbReference>
<dbReference type="HAMAP" id="MF_01011">
    <property type="entry name" value="RNA_methyltr_TrmA"/>
    <property type="match status" value="1"/>
</dbReference>
<dbReference type="InterPro" id="IPR030390">
    <property type="entry name" value="MeTrfase_TrmA_AS"/>
</dbReference>
<dbReference type="InterPro" id="IPR030391">
    <property type="entry name" value="MeTrfase_TrmA_CS"/>
</dbReference>
<dbReference type="InterPro" id="IPR029063">
    <property type="entry name" value="SAM-dependent_MTases_sf"/>
</dbReference>
<dbReference type="InterPro" id="IPR011869">
    <property type="entry name" value="TrmA_MeTrfase"/>
</dbReference>
<dbReference type="InterPro" id="IPR010280">
    <property type="entry name" value="U5_MeTrfase_fam"/>
</dbReference>
<dbReference type="NCBIfam" id="TIGR02143">
    <property type="entry name" value="trmA_only"/>
    <property type="match status" value="1"/>
</dbReference>
<dbReference type="PANTHER" id="PTHR47790">
    <property type="entry name" value="TRNA/TMRNA (URACIL-C(5))-METHYLTRANSFERASE"/>
    <property type="match status" value="1"/>
</dbReference>
<dbReference type="PANTHER" id="PTHR47790:SF2">
    <property type="entry name" value="TRNA_TMRNA (URACIL-C(5))-METHYLTRANSFERASE"/>
    <property type="match status" value="1"/>
</dbReference>
<dbReference type="Pfam" id="PF05958">
    <property type="entry name" value="tRNA_U5-meth_tr"/>
    <property type="match status" value="1"/>
</dbReference>
<dbReference type="SUPFAM" id="SSF53335">
    <property type="entry name" value="S-adenosyl-L-methionine-dependent methyltransferases"/>
    <property type="match status" value="1"/>
</dbReference>
<dbReference type="PROSITE" id="PS51687">
    <property type="entry name" value="SAM_MT_RNA_M5U"/>
    <property type="match status" value="1"/>
</dbReference>
<dbReference type="PROSITE" id="PS01230">
    <property type="entry name" value="TRMA_1"/>
    <property type="match status" value="1"/>
</dbReference>
<dbReference type="PROSITE" id="PS01231">
    <property type="entry name" value="TRMA_2"/>
    <property type="match status" value="1"/>
</dbReference>
<reference key="1">
    <citation type="journal article" date="2009" name="PLoS Genet.">
        <title>Organised genome dynamics in the Escherichia coli species results in highly diverse adaptive paths.</title>
        <authorList>
            <person name="Touchon M."/>
            <person name="Hoede C."/>
            <person name="Tenaillon O."/>
            <person name="Barbe V."/>
            <person name="Baeriswyl S."/>
            <person name="Bidet P."/>
            <person name="Bingen E."/>
            <person name="Bonacorsi S."/>
            <person name="Bouchier C."/>
            <person name="Bouvet O."/>
            <person name="Calteau A."/>
            <person name="Chiapello H."/>
            <person name="Clermont O."/>
            <person name="Cruveiller S."/>
            <person name="Danchin A."/>
            <person name="Diard M."/>
            <person name="Dossat C."/>
            <person name="Karoui M.E."/>
            <person name="Frapy E."/>
            <person name="Garry L."/>
            <person name="Ghigo J.M."/>
            <person name="Gilles A.M."/>
            <person name="Johnson J."/>
            <person name="Le Bouguenec C."/>
            <person name="Lescat M."/>
            <person name="Mangenot S."/>
            <person name="Martinez-Jehanne V."/>
            <person name="Matic I."/>
            <person name="Nassif X."/>
            <person name="Oztas S."/>
            <person name="Petit M.A."/>
            <person name="Pichon C."/>
            <person name="Rouy Z."/>
            <person name="Ruf C.S."/>
            <person name="Schneider D."/>
            <person name="Tourret J."/>
            <person name="Vacherie B."/>
            <person name="Vallenet D."/>
            <person name="Medigue C."/>
            <person name="Rocha E.P.C."/>
            <person name="Denamur E."/>
        </authorList>
    </citation>
    <scope>NUCLEOTIDE SEQUENCE [LARGE SCALE GENOMIC DNA]</scope>
    <source>
        <strain>S88 / ExPEC</strain>
    </source>
</reference>
<sequence length="366" mass="41936">MTPEHLPTEQYEAQLAEKVVRLQSMMAPFSDLVPEVFRSPVSHYRMRAEFRIWHDGDDLYHIIFDQQTKSRIRVDSFPAASELINQLMTAMIAGVRNNPILRHKLFQIDYLTTLSNQAVVSLLYHKKLDDEWRQQAEALRDALRAQNLNVHLIGRATKTKIALDQDYIDERLPIAGKEMIYRQVENSFTQPNAAMNIQMLEWALDVTKGSKGDLLELYCGNGNFSLALARNFDRVLATEIAKPSVAAAQYNIAANHIDNVQIIRMAAEEFTQAMNGVREFNRLQGIDLKSYQCETIFVDPPRSGLDSETEKMVQAYPRILYISCNPETLCKNLETLSQTHKVERLALFDQFPYTHHMECGVLLTAK</sequence>
<feature type="chain" id="PRO_1000198543" description="tRNA/tmRNA (uracil-C(5))-methyltransferase">
    <location>
        <begin position="1"/>
        <end position="366"/>
    </location>
</feature>
<feature type="active site" description="Nucleophile" evidence="1">
    <location>
        <position position="324"/>
    </location>
</feature>
<feature type="active site" description="Proton acceptor" evidence="1">
    <location>
        <position position="358"/>
    </location>
</feature>
<feature type="binding site" evidence="1">
    <location>
        <position position="190"/>
    </location>
    <ligand>
        <name>S-adenosyl-L-methionine</name>
        <dbReference type="ChEBI" id="CHEBI:59789"/>
    </ligand>
</feature>
<feature type="binding site" evidence="1">
    <location>
        <position position="218"/>
    </location>
    <ligand>
        <name>S-adenosyl-L-methionine</name>
        <dbReference type="ChEBI" id="CHEBI:59789"/>
    </ligand>
</feature>
<feature type="binding site" evidence="1">
    <location>
        <position position="223"/>
    </location>
    <ligand>
        <name>S-adenosyl-L-methionine</name>
        <dbReference type="ChEBI" id="CHEBI:59789"/>
    </ligand>
</feature>
<feature type="binding site" evidence="1">
    <location>
        <position position="239"/>
    </location>
    <ligand>
        <name>S-adenosyl-L-methionine</name>
        <dbReference type="ChEBI" id="CHEBI:59789"/>
    </ligand>
</feature>
<feature type="binding site" evidence="1">
    <location>
        <position position="299"/>
    </location>
    <ligand>
        <name>S-adenosyl-L-methionine</name>
        <dbReference type="ChEBI" id="CHEBI:59789"/>
    </ligand>
</feature>
<comment type="function">
    <text evidence="1">Dual-specificity methyltransferase that catalyzes the formation of 5-methyluridine at position 54 (m5U54) in all tRNAs, and that of position 341 (m5U341) in tmRNA (transfer-mRNA).</text>
</comment>
<comment type="catalytic activity">
    <reaction evidence="1">
        <text>uridine(54) in tRNA + S-adenosyl-L-methionine = 5-methyluridine(54) in tRNA + S-adenosyl-L-homocysteine + H(+)</text>
        <dbReference type="Rhea" id="RHEA:42712"/>
        <dbReference type="Rhea" id="RHEA-COMP:10167"/>
        <dbReference type="Rhea" id="RHEA-COMP:10193"/>
        <dbReference type="ChEBI" id="CHEBI:15378"/>
        <dbReference type="ChEBI" id="CHEBI:57856"/>
        <dbReference type="ChEBI" id="CHEBI:59789"/>
        <dbReference type="ChEBI" id="CHEBI:65315"/>
        <dbReference type="ChEBI" id="CHEBI:74447"/>
        <dbReference type="EC" id="2.1.1.35"/>
    </reaction>
</comment>
<comment type="catalytic activity">
    <reaction evidence="1">
        <text>uridine(341) in tmRNA + S-adenosyl-L-methionine = 5-methyluridine(341) in tmRNA + S-adenosyl-L-homocysteine + H(+)</text>
        <dbReference type="Rhea" id="RHEA:43612"/>
        <dbReference type="Rhea" id="RHEA-COMP:10630"/>
        <dbReference type="Rhea" id="RHEA-COMP:10631"/>
        <dbReference type="ChEBI" id="CHEBI:15378"/>
        <dbReference type="ChEBI" id="CHEBI:57856"/>
        <dbReference type="ChEBI" id="CHEBI:59789"/>
        <dbReference type="ChEBI" id="CHEBI:65315"/>
        <dbReference type="ChEBI" id="CHEBI:74447"/>
    </reaction>
</comment>
<comment type="similarity">
    <text evidence="1">Belongs to the class I-like SAM-binding methyltransferase superfamily. RNA M5U methyltransferase family. TrmA subfamily.</text>
</comment>
<protein>
    <recommendedName>
        <fullName evidence="1">tRNA/tmRNA (uracil-C(5))-methyltransferase</fullName>
        <ecNumber evidence="1">2.1.1.-</ecNumber>
        <ecNumber evidence="1">2.1.1.35</ecNumber>
    </recommendedName>
    <alternativeName>
        <fullName evidence="1">tRNA (uracil(54)-C(5))-methyltransferase</fullName>
    </alternativeName>
    <alternativeName>
        <fullName evidence="1">tRNA(m5U54)-methyltransferase</fullName>
        <shortName evidence="1">RUMT</shortName>
    </alternativeName>
    <alternativeName>
        <fullName evidence="1">tmRNA (uracil(341)-C(5))-methyltransferase</fullName>
    </alternativeName>
</protein>